<keyword id="KW-1185">Reference proteome</keyword>
<name>Y12I_BPT4</name>
<dbReference type="EMBL" id="X60109">
    <property type="protein sequence ID" value="CAA42706.1"/>
    <property type="molecule type" value="Genomic_DNA"/>
</dbReference>
<dbReference type="EMBL" id="AF158101">
    <property type="protein sequence ID" value="AAD42445.1"/>
    <property type="molecule type" value="Genomic_DNA"/>
</dbReference>
<dbReference type="PIR" id="S27148">
    <property type="entry name" value="S27148"/>
</dbReference>
<dbReference type="RefSeq" id="NP_049818.1">
    <property type="nucleotide sequence ID" value="NC_000866.4"/>
</dbReference>
<dbReference type="GeneID" id="1258714"/>
<dbReference type="KEGG" id="vg:1258714"/>
<dbReference type="OrthoDB" id="24695at10239"/>
<dbReference type="Proteomes" id="UP000009087">
    <property type="component" value="Segment"/>
</dbReference>
<sequence>MNIINKIFGIQYIKVTYKVTDKNPYTDEHEEPQVESIILEKDPNWPVEFRLPCYGHWADVEIISIENV</sequence>
<organism>
    <name type="scientific">Enterobacteria phage T4</name>
    <name type="common">Bacteriophage T4</name>
    <dbReference type="NCBI Taxonomy" id="10665"/>
    <lineage>
        <taxon>Viruses</taxon>
        <taxon>Duplodnaviria</taxon>
        <taxon>Heunggongvirae</taxon>
        <taxon>Uroviricota</taxon>
        <taxon>Caudoviricetes</taxon>
        <taxon>Straboviridae</taxon>
        <taxon>Tevenvirinae</taxon>
        <taxon>Tequatrovirus</taxon>
    </lineage>
</organism>
<evidence type="ECO:0000305" key="1"/>
<accession>Q02405</accession>
<accession>P89020</accession>
<accession>Q9T0T6</accession>
<reference key="1">
    <citation type="journal article" date="1992" name="DNA Seq.">
        <title>The nucleotide sequence between genes 31 and 30 of bacteriophage T4.</title>
        <authorList>
            <person name="Nivinskas R."/>
            <person name="Zajanckauskaite A."/>
            <person name="Raudonikiene A."/>
            <person name="Viteniene I."/>
        </authorList>
    </citation>
    <scope>NUCLEOTIDE SEQUENCE [GENOMIC DNA]</scope>
</reference>
<reference key="2">
    <citation type="submission" date="1997-02" db="EMBL/GenBank/DDBJ databases">
        <authorList>
            <person name="Nivinskas R."/>
        </authorList>
    </citation>
    <scope>SEQUENCE REVISION TO 41</scope>
</reference>
<reference key="3">
    <citation type="journal article" date="2003" name="Microbiol. Mol. Biol. Rev.">
        <title>Bacteriophage T4 genome.</title>
        <authorList>
            <person name="Miller E.S."/>
            <person name="Kutter E."/>
            <person name="Mosig G."/>
            <person name="Arisaka F."/>
            <person name="Kunisawa T."/>
            <person name="Ruger W."/>
        </authorList>
    </citation>
    <scope>NUCLEOTIDE SEQUENCE [LARGE SCALE GENOMIC DNA]</scope>
</reference>
<feature type="chain" id="PRO_0000165169" description="Uncharacterized 8.1 kDa protein in Gp30-rIII intergenic region">
    <location>
        <begin position="1"/>
        <end position="68"/>
    </location>
</feature>
<feature type="sequence conflict" description="In Ref. 3; AAD42445." evidence="1" ref="3">
    <original>K</original>
    <variation>R</variation>
    <location>
        <position position="41"/>
    </location>
</feature>
<protein>
    <recommendedName>
        <fullName>Uncharacterized 8.1 kDa protein in Gp30-rIII intergenic region</fullName>
    </recommendedName>
</protein>
<organismHost>
    <name type="scientific">Escherichia coli</name>
    <dbReference type="NCBI Taxonomy" id="562"/>
</organismHost>
<gene>
    <name type="primary">y12I</name>
    <name type="synonym">30.4</name>
</gene>
<proteinExistence type="predicted"/>